<gene>
    <name type="primary">SPS19</name>
    <name type="synonym">SPX19</name>
    <name type="ordered locus">YNL202W</name>
    <name type="ORF">N1362</name>
</gene>
<comment type="function">
    <text>Auxiliary enzyme of beta-oxidation. Participates in the degradation of unsaturated fatty enoyl-CoA esters having double bonds in both even- and odd-numbered positions in peroxisome. Catalyzes the NADP-dependent reduction of 2,4-dienoyl-CoA to yield trans-3-enoyl-CoA. Dispensable for growth and sporulation on solid acetate and oleate media, but is essential for these processes to occur on petroselineate.</text>
</comment>
<comment type="catalytic activity">
    <reaction evidence="5">
        <text>a (2E,4Z)-dienoyl-CoA + NADPH + H(+) = a 4,5-saturated-(3E)-enoyl-CoA + NADP(+)</text>
        <dbReference type="Rhea" id="RHEA:61892"/>
        <dbReference type="ChEBI" id="CHEBI:15378"/>
        <dbReference type="ChEBI" id="CHEBI:57783"/>
        <dbReference type="ChEBI" id="CHEBI:58349"/>
        <dbReference type="ChEBI" id="CHEBI:85099"/>
        <dbReference type="ChEBI" id="CHEBI:85493"/>
        <dbReference type="EC" id="1.3.1.124"/>
    </reaction>
</comment>
<comment type="catalytic activity">
    <reaction evidence="5">
        <text>a (2E,4E)-dienoyl-CoA + NADPH + H(+) = a 4,5-saturated-(3E)-enoyl-CoA + NADP(+)</text>
        <dbReference type="Rhea" id="RHEA:45912"/>
        <dbReference type="ChEBI" id="CHEBI:15378"/>
        <dbReference type="ChEBI" id="CHEBI:57783"/>
        <dbReference type="ChEBI" id="CHEBI:58349"/>
        <dbReference type="ChEBI" id="CHEBI:85101"/>
        <dbReference type="ChEBI" id="CHEBI:85493"/>
        <dbReference type="EC" id="1.3.1.124"/>
    </reaction>
</comment>
<comment type="subunit">
    <text evidence="5">Homodimer.</text>
</comment>
<comment type="subcellular location">
    <subcellularLocation>
        <location evidence="5">Peroxisome</location>
    </subcellularLocation>
</comment>
<comment type="developmental stage">
    <text>Sequentially activated during the process of meiosis and spore formation.</text>
</comment>
<comment type="induction">
    <text evidence="4 5 6">By oleate. Transcription is regulated by the transcription factors PIP2, OAF1 and ADR1. Weakly induced during sporulation in diploid cells.</text>
</comment>
<comment type="similarity">
    <text evidence="7">Belongs to the short-chain dehydrogenases/reductases (SDR) family.</text>
</comment>
<comment type="sequence caution" evidence="7">
    <conflict type="erroneous initiation">
        <sequence resource="EMBL-CDS" id="AAA62403"/>
    </conflict>
    <text>Extended N-terminus.</text>
</comment>
<comment type="sequence caution" evidence="7">
    <conflict type="erroneous initiation">
        <sequence resource="EMBL-CDS" id="AAT93138"/>
    </conflict>
    <text>Extended N-terminus.</text>
</comment>
<comment type="sequence caution" evidence="7">
    <conflict type="erroneous initiation">
        <sequence resource="EMBL-CDS" id="CAA55506"/>
    </conflict>
    <text>Extended N-terminus.</text>
</comment>
<comment type="sequence caution" evidence="7">
    <conflict type="erroneous initiation">
        <sequence resource="EMBL-CDS" id="CAA96103"/>
    </conflict>
    <text>Extended N-terminus.</text>
</comment>
<feature type="initiator methionine" description="Removed" evidence="5">
    <location>
        <position position="1"/>
    </location>
</feature>
<feature type="chain" id="PRO_0000054565" description="Peroxisomal 2,4-dienoyl-CoA reductase SPS19 [(3E)-enoyl-CoA-producing]">
    <location>
        <begin position="2"/>
        <end position="292"/>
    </location>
</feature>
<feature type="short sequence motif" description="Microbody targeting signal" evidence="3">
    <location>
        <begin position="290"/>
        <end position="292"/>
    </location>
</feature>
<feature type="active site" description="Proton donor" evidence="2">
    <location>
        <position position="162"/>
    </location>
</feature>
<feature type="active site" description="Lowers pKa of active site Tyr" evidence="2">
    <location>
        <position position="180"/>
    </location>
</feature>
<feature type="binding site" evidence="1">
    <location>
        <position position="36"/>
    </location>
    <ligand>
        <name>NADP(+)</name>
        <dbReference type="ChEBI" id="CHEBI:58349"/>
    </ligand>
</feature>
<feature type="binding site" evidence="1">
    <location>
        <position position="85"/>
    </location>
    <ligand>
        <name>NADP(+)</name>
        <dbReference type="ChEBI" id="CHEBI:58349"/>
    </ligand>
</feature>
<feature type="binding site" evidence="1">
    <location>
        <position position="145"/>
    </location>
    <ligand>
        <name>NADP(+)</name>
        <dbReference type="ChEBI" id="CHEBI:58349"/>
    </ligand>
</feature>
<feature type="binding site" evidence="2">
    <location>
        <position position="180"/>
    </location>
    <ligand>
        <name>NADP(+)</name>
        <dbReference type="ChEBI" id="CHEBI:58349"/>
    </ligand>
</feature>
<feature type="binding site" evidence="2">
    <location>
        <position position="209"/>
    </location>
    <ligand>
        <name>NADP(+)</name>
        <dbReference type="ChEBI" id="CHEBI:58349"/>
    </ligand>
</feature>
<feature type="cross-link" description="Glycyl lysine isopeptide (Lys-Gly) (interchain with G-Cter in ubiquitin)" evidence="8">
    <location>
        <position position="188"/>
    </location>
</feature>
<dbReference type="EC" id="1.3.1.124" evidence="5"/>
<dbReference type="EMBL" id="X78898">
    <property type="protein sequence ID" value="CAA55506.1"/>
    <property type="status" value="ALT_INIT"/>
    <property type="molecule type" value="Genomic_DNA"/>
</dbReference>
<dbReference type="EMBL" id="Z71479">
    <property type="protein sequence ID" value="CAA96103.1"/>
    <property type="status" value="ALT_INIT"/>
    <property type="molecule type" value="Genomic_DNA"/>
</dbReference>
<dbReference type="EMBL" id="AY693119">
    <property type="protein sequence ID" value="AAT93138.1"/>
    <property type="status" value="ALT_INIT"/>
    <property type="molecule type" value="Genomic_DNA"/>
</dbReference>
<dbReference type="EMBL" id="M90351">
    <property type="protein sequence ID" value="AAA62403.1"/>
    <property type="status" value="ALT_INIT"/>
    <property type="molecule type" value="Genomic_DNA"/>
</dbReference>
<dbReference type="EMBL" id="BK006947">
    <property type="protein sequence ID" value="DAA10352.1"/>
    <property type="molecule type" value="Genomic_DNA"/>
</dbReference>
<dbReference type="PIR" id="S50729">
    <property type="entry name" value="S50729"/>
</dbReference>
<dbReference type="RefSeq" id="NP_014197.2">
    <property type="nucleotide sequence ID" value="NM_001183040.1"/>
</dbReference>
<dbReference type="SMR" id="P32573"/>
<dbReference type="BioGRID" id="35632">
    <property type="interactions" value="53"/>
</dbReference>
<dbReference type="DIP" id="DIP-4294N"/>
<dbReference type="FunCoup" id="P32573">
    <property type="interactions" value="332"/>
</dbReference>
<dbReference type="IntAct" id="P32573">
    <property type="interactions" value="1"/>
</dbReference>
<dbReference type="STRING" id="4932.YNL202W"/>
<dbReference type="iPTMnet" id="P32573"/>
<dbReference type="PaxDb" id="4932-YNL202W"/>
<dbReference type="PeptideAtlas" id="P32573"/>
<dbReference type="EnsemblFungi" id="YNL202W_mRNA">
    <property type="protein sequence ID" value="YNL202W"/>
    <property type="gene ID" value="YNL202W"/>
</dbReference>
<dbReference type="GeneID" id="855518"/>
<dbReference type="KEGG" id="sce:YNL202W"/>
<dbReference type="AGR" id="SGD:S000005146"/>
<dbReference type="SGD" id="S000005146">
    <property type="gene designation" value="SPS19"/>
</dbReference>
<dbReference type="VEuPathDB" id="FungiDB:YNL202W"/>
<dbReference type="eggNOG" id="KOG0725">
    <property type="taxonomic scope" value="Eukaryota"/>
</dbReference>
<dbReference type="GeneTree" id="ENSGT00940000153801"/>
<dbReference type="HOGENOM" id="CLU_010194_1_2_1"/>
<dbReference type="InParanoid" id="P32573"/>
<dbReference type="OMA" id="ITPMGRP"/>
<dbReference type="OrthoDB" id="2136131at2759"/>
<dbReference type="BioCyc" id="MetaCyc:YNL202W-MONOMER"/>
<dbReference type="BioCyc" id="YEAST:YNL202W-MONOMER"/>
<dbReference type="BRENDA" id="1.3.1.124">
    <property type="organism ID" value="984"/>
</dbReference>
<dbReference type="Reactome" id="R-SCE-390247">
    <property type="pathway name" value="Beta-oxidation of very long chain fatty acids"/>
</dbReference>
<dbReference type="Reactome" id="R-SCE-9033241">
    <property type="pathway name" value="Peroxisomal protein import"/>
</dbReference>
<dbReference type="BioGRID-ORCS" id="855518">
    <property type="hits" value="3 hits in 10 CRISPR screens"/>
</dbReference>
<dbReference type="PRO" id="PR:P32573"/>
<dbReference type="Proteomes" id="UP000002311">
    <property type="component" value="Chromosome XIV"/>
</dbReference>
<dbReference type="RNAct" id="P32573">
    <property type="molecule type" value="protein"/>
</dbReference>
<dbReference type="GO" id="GO:0005782">
    <property type="term" value="C:peroxisomal matrix"/>
    <property type="evidence" value="ECO:0000314"/>
    <property type="project" value="SGD"/>
</dbReference>
<dbReference type="GO" id="GO:0005777">
    <property type="term" value="C:peroxisome"/>
    <property type="evidence" value="ECO:0000318"/>
    <property type="project" value="GO_Central"/>
</dbReference>
<dbReference type="GO" id="GO:0008670">
    <property type="term" value="F:2,4-dienoyl-CoA reductase (NADPH) activity"/>
    <property type="evidence" value="ECO:0000314"/>
    <property type="project" value="SGD"/>
</dbReference>
<dbReference type="GO" id="GO:0030437">
    <property type="term" value="P:ascospore formation"/>
    <property type="evidence" value="ECO:0000315"/>
    <property type="project" value="SGD"/>
</dbReference>
<dbReference type="GO" id="GO:0009062">
    <property type="term" value="P:fatty acid catabolic process"/>
    <property type="evidence" value="ECO:0000314"/>
    <property type="project" value="SGD"/>
</dbReference>
<dbReference type="GO" id="GO:0006631">
    <property type="term" value="P:fatty acid metabolic process"/>
    <property type="evidence" value="ECO:0000318"/>
    <property type="project" value="GO_Central"/>
</dbReference>
<dbReference type="CDD" id="cd05369">
    <property type="entry name" value="TER_DECR_SDR_a"/>
    <property type="match status" value="1"/>
</dbReference>
<dbReference type="FunFam" id="3.40.50.720:FF:000681">
    <property type="entry name" value="2,4-dienoyl-CoA reductase"/>
    <property type="match status" value="1"/>
</dbReference>
<dbReference type="Gene3D" id="3.40.50.720">
    <property type="entry name" value="NAD(P)-binding Rossmann-like Domain"/>
    <property type="match status" value="1"/>
</dbReference>
<dbReference type="InterPro" id="IPR045017">
    <property type="entry name" value="DECR2-like"/>
</dbReference>
<dbReference type="InterPro" id="IPR036291">
    <property type="entry name" value="NAD(P)-bd_dom_sf"/>
</dbReference>
<dbReference type="InterPro" id="IPR002347">
    <property type="entry name" value="SDR_fam"/>
</dbReference>
<dbReference type="PANTHER" id="PTHR43296">
    <property type="entry name" value="PEROXISOMAL 2,4-DIENOYL-COA REDUCTASE"/>
    <property type="match status" value="1"/>
</dbReference>
<dbReference type="PANTHER" id="PTHR43296:SF2">
    <property type="entry name" value="PEROXISOMAL 2,4-DIENOYL-COA REDUCTASE [(3E)-ENOYL-COA-PRODUCING]"/>
    <property type="match status" value="1"/>
</dbReference>
<dbReference type="Pfam" id="PF13561">
    <property type="entry name" value="adh_short_C2"/>
    <property type="match status" value="1"/>
</dbReference>
<dbReference type="PRINTS" id="PR00081">
    <property type="entry name" value="GDHRDH"/>
</dbReference>
<dbReference type="SUPFAM" id="SSF51735">
    <property type="entry name" value="NAD(P)-binding Rossmann-fold domains"/>
    <property type="match status" value="1"/>
</dbReference>
<organism>
    <name type="scientific">Saccharomyces cerevisiae (strain ATCC 204508 / S288c)</name>
    <name type="common">Baker's yeast</name>
    <dbReference type="NCBI Taxonomy" id="559292"/>
    <lineage>
        <taxon>Eukaryota</taxon>
        <taxon>Fungi</taxon>
        <taxon>Dikarya</taxon>
        <taxon>Ascomycota</taxon>
        <taxon>Saccharomycotina</taxon>
        <taxon>Saccharomycetes</taxon>
        <taxon>Saccharomycetales</taxon>
        <taxon>Saccharomycetaceae</taxon>
        <taxon>Saccharomyces</taxon>
    </lineage>
</organism>
<proteinExistence type="evidence at protein level"/>
<reference key="1">
    <citation type="journal article" date="1994" name="Yeast">
        <title>A 21.7 kb DNA segment on the left arm of yeast chromosome XIV carries WHI3, GCR2, SPX18, SPX19, an homologue to the heat shock gene SSB1 and 8 new open reading frames of unknown function.</title>
        <authorList>
            <person name="Jonniaux J.-L."/>
            <person name="Coster F."/>
            <person name="Purnelle B."/>
            <person name="Goffeau A."/>
        </authorList>
    </citation>
    <scope>NUCLEOTIDE SEQUENCE [GENOMIC DNA]</scope>
    <source>
        <strain>ATCC 96604 / S288c / FY1679</strain>
    </source>
</reference>
<reference key="2">
    <citation type="journal article" date="1997" name="Nature">
        <title>The nucleotide sequence of Saccharomyces cerevisiae chromosome XIV and its evolutionary implications.</title>
        <authorList>
            <person name="Philippsen P."/>
            <person name="Kleine K."/>
            <person name="Poehlmann R."/>
            <person name="Duesterhoeft A."/>
            <person name="Hamberg K."/>
            <person name="Hegemann J.H."/>
            <person name="Obermaier B."/>
            <person name="Urrestarazu L.A."/>
            <person name="Aert R."/>
            <person name="Albermann K."/>
            <person name="Altmann R."/>
            <person name="Andre B."/>
            <person name="Baladron V."/>
            <person name="Ballesta J.P.G."/>
            <person name="Becam A.-M."/>
            <person name="Beinhauer J.D."/>
            <person name="Boskovic J."/>
            <person name="Buitrago M.J."/>
            <person name="Bussereau F."/>
            <person name="Coster F."/>
            <person name="Crouzet M."/>
            <person name="D'Angelo M."/>
            <person name="Dal Pero F."/>
            <person name="De Antoni A."/>
            <person name="del Rey F."/>
            <person name="Doignon F."/>
            <person name="Domdey H."/>
            <person name="Dubois E."/>
            <person name="Fiedler T.A."/>
            <person name="Fleig U."/>
            <person name="Floeth M."/>
            <person name="Fritz C."/>
            <person name="Gaillardin C."/>
            <person name="Garcia-Cantalejo J.M."/>
            <person name="Glansdorff N."/>
            <person name="Goffeau A."/>
            <person name="Gueldener U."/>
            <person name="Herbert C.J."/>
            <person name="Heumann K."/>
            <person name="Heuss-Neitzel D."/>
            <person name="Hilbert H."/>
            <person name="Hinni K."/>
            <person name="Iraqui Houssaini I."/>
            <person name="Jacquet M."/>
            <person name="Jimenez A."/>
            <person name="Jonniaux J.-L."/>
            <person name="Karpfinger-Hartl L."/>
            <person name="Lanfranchi G."/>
            <person name="Lepingle A."/>
            <person name="Levesque H."/>
            <person name="Lyck R."/>
            <person name="Maftahi M."/>
            <person name="Mallet L."/>
            <person name="Maurer C.T.C."/>
            <person name="Messenguy F."/>
            <person name="Mewes H.-W."/>
            <person name="Moestl D."/>
            <person name="Nasr F."/>
            <person name="Nicaud J.-M."/>
            <person name="Niedenthal R.K."/>
            <person name="Pandolfo D."/>
            <person name="Pierard A."/>
            <person name="Piravandi E."/>
            <person name="Planta R.J."/>
            <person name="Pohl T.M."/>
            <person name="Purnelle B."/>
            <person name="Rebischung C."/>
            <person name="Remacha M.A."/>
            <person name="Revuelta J.L."/>
            <person name="Rinke M."/>
            <person name="Saiz J.E."/>
            <person name="Sartorello F."/>
            <person name="Scherens B."/>
            <person name="Sen-Gupta M."/>
            <person name="Soler-Mira A."/>
            <person name="Urbanus J.H.M."/>
            <person name="Valle G."/>
            <person name="Van Dyck L."/>
            <person name="Verhasselt P."/>
            <person name="Vierendeels F."/>
            <person name="Vissers S."/>
            <person name="Voet M."/>
            <person name="Volckaert G."/>
            <person name="Wach A."/>
            <person name="Wambutt R."/>
            <person name="Wedler H."/>
            <person name="Zollner A."/>
            <person name="Hani J."/>
        </authorList>
    </citation>
    <scope>NUCLEOTIDE SEQUENCE [LARGE SCALE GENOMIC DNA]</scope>
    <source>
        <strain>ATCC 204508 / S288c</strain>
    </source>
</reference>
<reference key="3">
    <citation type="journal article" date="2014" name="G3 (Bethesda)">
        <title>The reference genome sequence of Saccharomyces cerevisiae: Then and now.</title>
        <authorList>
            <person name="Engel S.R."/>
            <person name="Dietrich F.S."/>
            <person name="Fisk D.G."/>
            <person name="Binkley G."/>
            <person name="Balakrishnan R."/>
            <person name="Costanzo M.C."/>
            <person name="Dwight S.S."/>
            <person name="Hitz B.C."/>
            <person name="Karra K."/>
            <person name="Nash R.S."/>
            <person name="Weng S."/>
            <person name="Wong E.D."/>
            <person name="Lloyd P."/>
            <person name="Skrzypek M.S."/>
            <person name="Miyasato S.R."/>
            <person name="Simison M."/>
            <person name="Cherry J.M."/>
        </authorList>
    </citation>
    <scope>GENOME REANNOTATION</scope>
    <source>
        <strain>ATCC 204508 / S288c</strain>
    </source>
</reference>
<reference key="4">
    <citation type="journal article" date="2007" name="Genome Res.">
        <title>Approaching a complete repository of sequence-verified protein-encoding clones for Saccharomyces cerevisiae.</title>
        <authorList>
            <person name="Hu Y."/>
            <person name="Rolfs A."/>
            <person name="Bhullar B."/>
            <person name="Murthy T.V.S."/>
            <person name="Zhu C."/>
            <person name="Berger M.F."/>
            <person name="Camargo A.A."/>
            <person name="Kelley F."/>
            <person name="McCarron S."/>
            <person name="Jepson D."/>
            <person name="Richardson A."/>
            <person name="Raphael J."/>
            <person name="Moreira D."/>
            <person name="Taycher E."/>
            <person name="Zuo D."/>
            <person name="Mohr S."/>
            <person name="Kane M.F."/>
            <person name="Williamson J."/>
            <person name="Simpson A.J.G."/>
            <person name="Bulyk M.L."/>
            <person name="Harlow E."/>
            <person name="Marsischky G."/>
            <person name="Kolodner R.D."/>
            <person name="LaBaer J."/>
        </authorList>
    </citation>
    <scope>NUCLEOTIDE SEQUENCE [GENOMIC DNA]</scope>
    <source>
        <strain>ATCC 204508 / S288c</strain>
    </source>
</reference>
<reference key="5">
    <citation type="journal article" date="1994" name="Mol. Gen. Genet.">
        <title>Identification of a sporulation-specific promoter regulating divergent transcription of two novel sporulation genes in Saccharomyces cerevisiae.</title>
        <authorList>
            <person name="Coe J.G."/>
            <person name="Murray L.E."/>
            <person name="Dawes I.W."/>
        </authorList>
    </citation>
    <scope>NUCLEOTIDE SEQUENCE [GENOMIC DNA] OF 1-260</scope>
    <source>
        <strain>ATCC 28684 / S14</strain>
    </source>
</reference>
<reference key="6">
    <citation type="journal article" date="1997" name="J. Biol. Chem.">
        <title>The Saccharomyces cerevisiae peroxisomal 2,4-dienoyl-CoA reductase is encoded by the oleate-inducible gene SPS19.</title>
        <authorList>
            <person name="Gurvitz A."/>
            <person name="Rottensteiner H."/>
            <person name="Kilpelaeinen S.H."/>
            <person name="Hartig A."/>
            <person name="Hiltunen J.K."/>
            <person name="Binder M."/>
            <person name="Dawes I.W."/>
            <person name="Hamilton B."/>
        </authorList>
    </citation>
    <scope>PROTEIN SEQUENCE OF 2-13</scope>
    <scope>ENZYME ACTIVITY</scope>
    <scope>SUBUNIT</scope>
    <scope>SUBCELLULAR LOCATION</scope>
    <scope>INDUCTION</scope>
</reference>
<reference key="7">
    <citation type="journal article" date="1997" name="Mol. Microbiol.">
        <title>Regulation of the yeast SPS19 gene encoding peroxisomal 2,4-dienoyl-CoA reductase by the transcription factors Pip2p and Oaf1p: beta-oxidation is dispensable for Saccharomyces cerevisiae sporulation in acetate medium.</title>
        <authorList>
            <person name="Gurvitz A."/>
            <person name="Rottensteiner H."/>
            <person name="Hiltunen J.K."/>
            <person name="Binder M."/>
            <person name="Dawes I.W."/>
            <person name="Ruis H."/>
            <person name="Hamilton B."/>
        </authorList>
    </citation>
    <scope>INDUCTION</scope>
</reference>
<reference key="8">
    <citation type="journal article" date="2000" name="Mol. Cell Biol. Res. Commun.">
        <title>Adr1p-dependent regulation of the oleic acid-inducible yeast gene SPS19 encoding the peroxisomal beta-oxidation auxiliary enzyme 2,4-dienoyl-CoA reductase.</title>
        <authorList>
            <person name="Gurvitz A."/>
            <person name="Wabnegger L."/>
            <person name="Rottensteiner H."/>
            <person name="Dawes I.W."/>
            <person name="Hartig A."/>
            <person name="Ruis H."/>
            <person name="Hamilton B."/>
        </authorList>
    </citation>
    <scope>INDUCTION</scope>
</reference>
<reference key="9">
    <citation type="journal article" date="2012" name="Proteomics">
        <title>Sites of ubiquitin attachment in Saccharomyces cerevisiae.</title>
        <authorList>
            <person name="Starita L.M."/>
            <person name="Lo R.S."/>
            <person name="Eng J.K."/>
            <person name="von Haller P.D."/>
            <person name="Fields S."/>
        </authorList>
    </citation>
    <scope>UBIQUITINATION [LARGE SCALE ANALYSIS] AT LYS-188</scope>
    <scope>IDENTIFICATION BY MASS SPECTROMETRY [LARGE SCALE ANALYSIS]</scope>
</reference>
<protein>
    <recommendedName>
        <fullName>Peroxisomal 2,4-dienoyl-CoA reductase SPS19 [(3E)-enoyl-CoA-producing]</fullName>
        <ecNumber evidence="5">1.3.1.124</ecNumber>
    </recommendedName>
    <alternativeName>
        <fullName>Sporulation-specific protein SPX19</fullName>
    </alternativeName>
</protein>
<sequence length="292" mass="31109">MNTANTLDGKFVTEGSWRPDLFKGKVAFVTGGAGTICRVQTEALVLLGCKAAIVGRDQERTEQAAKGISQLAKDKDAVLAIANVDVRNFEQVENAVKKTVEKFGKIDFVIAGAAGNFVCDFANLSPNAFKSVVDIDLLGSFNTAKACLKELKKSKGSILFVSATFHYYGVPFQGHVGAAKAGIDALAKNLAVELGPLGIRSNCIAPGAIDNTEGLKRLAGKKYKEKALAKIPLQRLGSTRDIAESTVYIFSPAASYVTGTVLVVDGGMWHLGTYFGHELYPEALIKSMTSKL</sequence>
<keyword id="KW-0903">Direct protein sequencing</keyword>
<keyword id="KW-1017">Isopeptide bond</keyword>
<keyword id="KW-0521">NADP</keyword>
<keyword id="KW-0560">Oxidoreductase</keyword>
<keyword id="KW-0576">Peroxisome</keyword>
<keyword id="KW-1185">Reference proteome</keyword>
<keyword id="KW-0749">Sporulation</keyword>
<keyword id="KW-0832">Ubl conjugation</keyword>
<name>SPS19_YEAST</name>
<accession>P32573</accession>
<accession>D6W0Y6</accession>
<evidence type="ECO:0000250" key="1">
    <source>
        <dbReference type="UniProtKB" id="L0E2Z4"/>
    </source>
</evidence>
<evidence type="ECO:0000250" key="2">
    <source>
        <dbReference type="UniProtKB" id="O93868"/>
    </source>
</evidence>
<evidence type="ECO:0000255" key="3"/>
<evidence type="ECO:0000269" key="4">
    <source>
    </source>
</evidence>
<evidence type="ECO:0000269" key="5">
    <source>
    </source>
</evidence>
<evidence type="ECO:0000269" key="6">
    <source>
    </source>
</evidence>
<evidence type="ECO:0000305" key="7"/>
<evidence type="ECO:0007744" key="8">
    <source>
    </source>
</evidence>